<proteinExistence type="inferred from homology"/>
<keyword id="KW-0010">Activator</keyword>
<keyword id="KW-0539">Nucleus</keyword>
<keyword id="KW-0804">Transcription</keyword>
<keyword id="KW-0805">Transcription regulation</keyword>
<gene>
    <name type="primary">MED7</name>
    <name type="ordered locus">CNBM1190</name>
</gene>
<reference key="1">
    <citation type="journal article" date="2005" name="Science">
        <title>The genome of the basidiomycetous yeast and human pathogen Cryptococcus neoformans.</title>
        <authorList>
            <person name="Loftus B.J."/>
            <person name="Fung E."/>
            <person name="Roncaglia P."/>
            <person name="Rowley D."/>
            <person name="Amedeo P."/>
            <person name="Bruno D."/>
            <person name="Vamathevan J."/>
            <person name="Miranda M."/>
            <person name="Anderson I.J."/>
            <person name="Fraser J.A."/>
            <person name="Allen J.E."/>
            <person name="Bosdet I.E."/>
            <person name="Brent M.R."/>
            <person name="Chiu R."/>
            <person name="Doering T.L."/>
            <person name="Donlin M.J."/>
            <person name="D'Souza C.A."/>
            <person name="Fox D.S."/>
            <person name="Grinberg V."/>
            <person name="Fu J."/>
            <person name="Fukushima M."/>
            <person name="Haas B.J."/>
            <person name="Huang J.C."/>
            <person name="Janbon G."/>
            <person name="Jones S.J.M."/>
            <person name="Koo H.L."/>
            <person name="Krzywinski M.I."/>
            <person name="Kwon-Chung K.J."/>
            <person name="Lengeler K.B."/>
            <person name="Maiti R."/>
            <person name="Marra M.A."/>
            <person name="Marra R.E."/>
            <person name="Mathewson C.A."/>
            <person name="Mitchell T.G."/>
            <person name="Pertea M."/>
            <person name="Riggs F.R."/>
            <person name="Salzberg S.L."/>
            <person name="Schein J.E."/>
            <person name="Shvartsbeyn A."/>
            <person name="Shin H."/>
            <person name="Shumway M."/>
            <person name="Specht C.A."/>
            <person name="Suh B.B."/>
            <person name="Tenney A."/>
            <person name="Utterback T.R."/>
            <person name="Wickes B.L."/>
            <person name="Wortman J.R."/>
            <person name="Wye N.H."/>
            <person name="Kronstad J.W."/>
            <person name="Lodge J.K."/>
            <person name="Heitman J."/>
            <person name="Davis R.W."/>
            <person name="Fraser C.M."/>
            <person name="Hyman R.W."/>
        </authorList>
    </citation>
    <scope>NUCLEOTIDE SEQUENCE [LARGE SCALE GENOMIC DNA]</scope>
    <source>
        <strain>B-3501A</strain>
    </source>
</reference>
<organism>
    <name type="scientific">Cryptococcus neoformans var. neoformans serotype D (strain B-3501A)</name>
    <name type="common">Filobasidiella neoformans</name>
    <dbReference type="NCBI Taxonomy" id="283643"/>
    <lineage>
        <taxon>Eukaryota</taxon>
        <taxon>Fungi</taxon>
        <taxon>Dikarya</taxon>
        <taxon>Basidiomycota</taxon>
        <taxon>Agaricomycotina</taxon>
        <taxon>Tremellomycetes</taxon>
        <taxon>Tremellales</taxon>
        <taxon>Cryptococcaceae</taxon>
        <taxon>Cryptococcus</taxon>
        <taxon>Cryptococcus neoformans species complex</taxon>
    </lineage>
</organism>
<evidence type="ECO:0000250" key="1"/>
<evidence type="ECO:0000256" key="2">
    <source>
        <dbReference type="SAM" id="MobiDB-lite"/>
    </source>
</evidence>
<evidence type="ECO:0000305" key="3"/>
<feature type="chain" id="PRO_0000410145" description="Mediator of RNA polymerase II transcription subunit 7">
    <location>
        <begin position="1"/>
        <end position="239"/>
    </location>
</feature>
<feature type="region of interest" description="Disordered" evidence="2">
    <location>
        <begin position="1"/>
        <end position="21"/>
    </location>
</feature>
<feature type="region of interest" description="Disordered" evidence="2">
    <location>
        <begin position="43"/>
        <end position="66"/>
    </location>
</feature>
<feature type="compositionally biased region" description="Basic and acidic residues" evidence="2">
    <location>
        <begin position="46"/>
        <end position="66"/>
    </location>
</feature>
<comment type="function">
    <text evidence="1">Component of the Mediator complex, a coactivator involved in the regulated transcription of nearly all RNA polymerase II-dependent genes. Mediator functions as a bridge to convey information from gene-specific regulatory proteins to the basal RNA polymerase II transcription machinery. Mediator is recruited to promoters by direct interactions with regulatory proteins and serves as a scaffold for the assembly of a functional preinitiation complex with RNA polymerase II and the general transcription factors (By similarity).</text>
</comment>
<comment type="subunit">
    <text evidence="1">Component of the Mediator complex.</text>
</comment>
<comment type="subcellular location">
    <subcellularLocation>
        <location evidence="1">Nucleus</location>
    </subcellularLocation>
</comment>
<comment type="similarity">
    <text evidence="3">Belongs to the Mediator complex subunit 7 family.</text>
</comment>
<name>MED7_CRYNB</name>
<sequence length="239" mass="26889">MSSLPQEAALPITNTLFPPPPPYFQAFTDEAIERYETLTGKSLFVNDEKGKTKGKEKKSDDRDMSVDIRIQDLTEEEQNEKLELEGKLEKPRADWVNEDGRWMCFGTMYTTEPIIPTAQSIGLPPFIDPAVEPQESLPPLLHSFLHTLLLLLDTLTMTARTPNELAAAGWASEGDQYIQHLTNLSANMMVASNQLRSAQSEATLVLLMEKELEERRKQTEKLRSKCKEIASGIRALKGL</sequence>
<dbReference type="EMBL" id="AAEY01000062">
    <property type="protein sequence ID" value="EAL17553.1"/>
    <property type="molecule type" value="Genomic_DNA"/>
</dbReference>
<dbReference type="RefSeq" id="XP_772200.1">
    <property type="nucleotide sequence ID" value="XM_767107.1"/>
</dbReference>
<dbReference type="SMR" id="P0CO77"/>
<dbReference type="EnsemblFungi" id="AAW46758">
    <property type="protein sequence ID" value="AAW46758"/>
    <property type="gene ID" value="CNM01330"/>
</dbReference>
<dbReference type="GeneID" id="4939479"/>
<dbReference type="KEGG" id="cnb:CNBM1190"/>
<dbReference type="VEuPathDB" id="FungiDB:CNBM1190"/>
<dbReference type="HOGENOM" id="CLU_1120792_0_0_1"/>
<dbReference type="OrthoDB" id="8924at5206"/>
<dbReference type="GO" id="GO:0070847">
    <property type="term" value="C:core mediator complex"/>
    <property type="evidence" value="ECO:0007669"/>
    <property type="project" value="TreeGrafter"/>
</dbReference>
<dbReference type="GO" id="GO:0016592">
    <property type="term" value="C:mediator complex"/>
    <property type="evidence" value="ECO:0007669"/>
    <property type="project" value="InterPro"/>
</dbReference>
<dbReference type="GO" id="GO:0003712">
    <property type="term" value="F:transcription coregulator activity"/>
    <property type="evidence" value="ECO:0007669"/>
    <property type="project" value="InterPro"/>
</dbReference>
<dbReference type="GO" id="GO:0006357">
    <property type="term" value="P:regulation of transcription by RNA polymerase II"/>
    <property type="evidence" value="ECO:0007669"/>
    <property type="project" value="InterPro"/>
</dbReference>
<dbReference type="Gene3D" id="6.10.140.1520">
    <property type="match status" value="1"/>
</dbReference>
<dbReference type="Gene3D" id="6.10.140.200">
    <property type="match status" value="1"/>
</dbReference>
<dbReference type="InterPro" id="IPR037212">
    <property type="entry name" value="Med7/Med21-like"/>
</dbReference>
<dbReference type="InterPro" id="IPR009244">
    <property type="entry name" value="Mediatior_Med7"/>
</dbReference>
<dbReference type="InterPro" id="IPR044888">
    <property type="entry name" value="Mediatior_Med7_sf"/>
</dbReference>
<dbReference type="PANTHER" id="PTHR21428">
    <property type="entry name" value="MEDIATOR OF RNA POLYMERASE II TRANSCRIPTION SUBUNIT 7"/>
    <property type="match status" value="1"/>
</dbReference>
<dbReference type="PANTHER" id="PTHR21428:SF11">
    <property type="entry name" value="MEDIATOR OF RNA POLYMERASE II TRANSCRIPTION SUBUNIT 7"/>
    <property type="match status" value="1"/>
</dbReference>
<dbReference type="Pfam" id="PF05983">
    <property type="entry name" value="Med7"/>
    <property type="match status" value="1"/>
</dbReference>
<dbReference type="SUPFAM" id="SSF140718">
    <property type="entry name" value="Mediator hinge subcomplex-like"/>
    <property type="match status" value="1"/>
</dbReference>
<protein>
    <recommendedName>
        <fullName>Mediator of RNA polymerase II transcription subunit 7</fullName>
    </recommendedName>
    <alternativeName>
        <fullName>Mediator complex subunit 7</fullName>
    </alternativeName>
</protein>
<accession>P0CO77</accession>
<accession>Q55IA0</accession>
<accession>Q5K7T6</accession>